<name>HCP_SHEB8</name>
<keyword id="KW-0001">2Fe-2S</keyword>
<keyword id="KW-0963">Cytoplasm</keyword>
<keyword id="KW-0408">Iron</keyword>
<keyword id="KW-0411">Iron-sulfur</keyword>
<keyword id="KW-0479">Metal-binding</keyword>
<keyword id="KW-0560">Oxidoreductase</keyword>
<dbReference type="EC" id="1.7.99.1" evidence="1"/>
<dbReference type="EMBL" id="CP000753">
    <property type="protein sequence ID" value="ABS07411.1"/>
    <property type="molecule type" value="Genomic_DNA"/>
</dbReference>
<dbReference type="RefSeq" id="WP_012088610.1">
    <property type="nucleotide sequence ID" value="NC_009665.1"/>
</dbReference>
<dbReference type="SMR" id="A6WKS2"/>
<dbReference type="KEGG" id="sbm:Shew185_1260"/>
<dbReference type="HOGENOM" id="CLU_038344_2_0_6"/>
<dbReference type="GO" id="GO:0005737">
    <property type="term" value="C:cytoplasm"/>
    <property type="evidence" value="ECO:0007669"/>
    <property type="project" value="UniProtKB-SubCell"/>
</dbReference>
<dbReference type="GO" id="GO:0051537">
    <property type="term" value="F:2 iron, 2 sulfur cluster binding"/>
    <property type="evidence" value="ECO:0007669"/>
    <property type="project" value="UniProtKB-KW"/>
</dbReference>
<dbReference type="GO" id="GO:0050418">
    <property type="term" value="F:hydroxylamine reductase activity"/>
    <property type="evidence" value="ECO:0007669"/>
    <property type="project" value="UniProtKB-UniRule"/>
</dbReference>
<dbReference type="GO" id="GO:0046872">
    <property type="term" value="F:metal ion binding"/>
    <property type="evidence" value="ECO:0007669"/>
    <property type="project" value="UniProtKB-KW"/>
</dbReference>
<dbReference type="GO" id="GO:0004601">
    <property type="term" value="F:peroxidase activity"/>
    <property type="evidence" value="ECO:0007669"/>
    <property type="project" value="TreeGrafter"/>
</dbReference>
<dbReference type="GO" id="GO:0042542">
    <property type="term" value="P:response to hydrogen peroxide"/>
    <property type="evidence" value="ECO:0007669"/>
    <property type="project" value="TreeGrafter"/>
</dbReference>
<dbReference type="CDD" id="cd01914">
    <property type="entry name" value="HCP"/>
    <property type="match status" value="1"/>
</dbReference>
<dbReference type="FunFam" id="1.20.1270.20:FF:000001">
    <property type="entry name" value="Hydroxylamine reductase"/>
    <property type="match status" value="1"/>
</dbReference>
<dbReference type="FunFam" id="1.20.1270.20:FF:000002">
    <property type="entry name" value="Hydroxylamine reductase"/>
    <property type="match status" value="1"/>
</dbReference>
<dbReference type="FunFam" id="3.40.50.2030:FF:000001">
    <property type="entry name" value="Hydroxylamine reductase"/>
    <property type="match status" value="1"/>
</dbReference>
<dbReference type="FunFam" id="3.40.50.2030:FF:000002">
    <property type="entry name" value="Hydroxylamine reductase"/>
    <property type="match status" value="1"/>
</dbReference>
<dbReference type="Gene3D" id="1.20.1270.20">
    <property type="match status" value="2"/>
</dbReference>
<dbReference type="Gene3D" id="3.40.50.2030">
    <property type="match status" value="2"/>
</dbReference>
<dbReference type="HAMAP" id="MF_00069">
    <property type="entry name" value="Hydroxylam_reduct"/>
    <property type="match status" value="1"/>
</dbReference>
<dbReference type="InterPro" id="IPR004137">
    <property type="entry name" value="HCP/CODH"/>
</dbReference>
<dbReference type="InterPro" id="IPR010048">
    <property type="entry name" value="Hydroxylam_reduct"/>
</dbReference>
<dbReference type="InterPro" id="IPR016099">
    <property type="entry name" value="Prismane-like_a/b-sand"/>
</dbReference>
<dbReference type="InterPro" id="IPR011254">
    <property type="entry name" value="Prismane-like_sf"/>
</dbReference>
<dbReference type="InterPro" id="IPR016100">
    <property type="entry name" value="Prismane_a-bundle"/>
</dbReference>
<dbReference type="NCBIfam" id="TIGR01703">
    <property type="entry name" value="hybrid_clust"/>
    <property type="match status" value="1"/>
</dbReference>
<dbReference type="NCBIfam" id="NF003658">
    <property type="entry name" value="PRK05290.1"/>
    <property type="match status" value="1"/>
</dbReference>
<dbReference type="PANTHER" id="PTHR30109">
    <property type="entry name" value="HYDROXYLAMINE REDUCTASE"/>
    <property type="match status" value="1"/>
</dbReference>
<dbReference type="PANTHER" id="PTHR30109:SF0">
    <property type="entry name" value="HYDROXYLAMINE REDUCTASE"/>
    <property type="match status" value="1"/>
</dbReference>
<dbReference type="Pfam" id="PF03063">
    <property type="entry name" value="Prismane"/>
    <property type="match status" value="1"/>
</dbReference>
<dbReference type="PIRSF" id="PIRSF000076">
    <property type="entry name" value="HCP"/>
    <property type="match status" value="1"/>
</dbReference>
<dbReference type="SUPFAM" id="SSF56821">
    <property type="entry name" value="Prismane protein-like"/>
    <property type="match status" value="1"/>
</dbReference>
<proteinExistence type="inferred from homology"/>
<protein>
    <recommendedName>
        <fullName evidence="1">Hydroxylamine reductase</fullName>
        <ecNumber evidence="1">1.7.99.1</ecNumber>
    </recommendedName>
    <alternativeName>
        <fullName evidence="1">Hybrid-cluster protein</fullName>
        <shortName evidence="1">HCP</shortName>
    </alternativeName>
    <alternativeName>
        <fullName evidence="1">Prismane protein</fullName>
    </alternativeName>
</protein>
<organism>
    <name type="scientific">Shewanella baltica (strain OS185)</name>
    <dbReference type="NCBI Taxonomy" id="402882"/>
    <lineage>
        <taxon>Bacteria</taxon>
        <taxon>Pseudomonadati</taxon>
        <taxon>Pseudomonadota</taxon>
        <taxon>Gammaproteobacteria</taxon>
        <taxon>Alteromonadales</taxon>
        <taxon>Shewanellaceae</taxon>
        <taxon>Shewanella</taxon>
    </lineage>
</organism>
<sequence length="554" mass="60228">MFCIQCEQTIRTPAGNGCSYSQGMCGKLAATSDLQDLLIYMLQGVSVYAVKAREQGIIDAEIDSFVPKAFFSTLTNVNFDDERIMAYAQQAAHYRAQLKASYEAACEQAGIAVEQVPQVAQLVLGTSKIEMLAQAPIALLNKDKHDVHEDIMGLRLLCLYGLKGAAAYMEHARVLGQTDADVAGRFHEIMSFLGEPSVDGDKLFTTAMDIGQLNYRIMAMLDAGETQAFGHPEPTVVNTKSVKGKAILVSGHDMKDLELILEQTVGKGINVFTHGEMLPALAYPAFKKYPHLVGNYGSAWQNQQQEFANFPGAVVMTSNCIIDPNVGSYSDRIFTRSIVGWPGVVHIEGDDFSAVIDKALALEGFIYDEIPHTITIGFARNALMAAAPAVVENVKSGAIKHFFLVGGCDGDKADRSYFTELAKSTPKDSLILTLGCGKYKFNKLEFGDINGIPRLLDVGQCNDAYSAIQLAIALAEVFECDINELPLSLVLSWFEQKAIVVLLTLLSLGVKNIRTGPTPPAFLTANLAKILEEKFGLRNTTTVEADLKTMLNVA</sequence>
<feature type="chain" id="PRO_1000009164" description="Hydroxylamine reductase">
    <location>
        <begin position="1"/>
        <end position="554"/>
    </location>
</feature>
<feature type="binding site" evidence="1">
    <location>
        <position position="3"/>
    </location>
    <ligand>
        <name>[2Fe-2S] cluster</name>
        <dbReference type="ChEBI" id="CHEBI:190135"/>
    </ligand>
</feature>
<feature type="binding site" evidence="1">
    <location>
        <position position="6"/>
    </location>
    <ligand>
        <name>[2Fe-2S] cluster</name>
        <dbReference type="ChEBI" id="CHEBI:190135"/>
    </ligand>
</feature>
<feature type="binding site" evidence="1">
    <location>
        <position position="18"/>
    </location>
    <ligand>
        <name>[2Fe-2S] cluster</name>
        <dbReference type="ChEBI" id="CHEBI:190135"/>
    </ligand>
</feature>
<feature type="binding site" evidence="1">
    <location>
        <position position="25"/>
    </location>
    <ligand>
        <name>[2Fe-2S] cluster</name>
        <dbReference type="ChEBI" id="CHEBI:190135"/>
    </ligand>
</feature>
<feature type="binding site" evidence="1">
    <location>
        <position position="252"/>
    </location>
    <ligand>
        <name>hybrid [4Fe-2O-2S] cluster</name>
        <dbReference type="ChEBI" id="CHEBI:60519"/>
    </ligand>
</feature>
<feature type="binding site" evidence="1">
    <location>
        <position position="276"/>
    </location>
    <ligand>
        <name>hybrid [4Fe-2O-2S] cluster</name>
        <dbReference type="ChEBI" id="CHEBI:60519"/>
    </ligand>
</feature>
<feature type="binding site" evidence="1">
    <location>
        <position position="320"/>
    </location>
    <ligand>
        <name>hybrid [4Fe-2O-2S] cluster</name>
        <dbReference type="ChEBI" id="CHEBI:60519"/>
    </ligand>
</feature>
<feature type="binding site" description="via persulfide group" evidence="1">
    <location>
        <position position="408"/>
    </location>
    <ligand>
        <name>hybrid [4Fe-2O-2S] cluster</name>
        <dbReference type="ChEBI" id="CHEBI:60519"/>
    </ligand>
</feature>
<feature type="binding site" evidence="1">
    <location>
        <position position="436"/>
    </location>
    <ligand>
        <name>hybrid [4Fe-2O-2S] cluster</name>
        <dbReference type="ChEBI" id="CHEBI:60519"/>
    </ligand>
</feature>
<feature type="binding site" evidence="1">
    <location>
        <position position="461"/>
    </location>
    <ligand>
        <name>hybrid [4Fe-2O-2S] cluster</name>
        <dbReference type="ChEBI" id="CHEBI:60519"/>
    </ligand>
</feature>
<feature type="binding site" evidence="1">
    <location>
        <position position="495"/>
    </location>
    <ligand>
        <name>hybrid [4Fe-2O-2S] cluster</name>
        <dbReference type="ChEBI" id="CHEBI:60519"/>
    </ligand>
</feature>
<feature type="binding site" evidence="1">
    <location>
        <position position="497"/>
    </location>
    <ligand>
        <name>hybrid [4Fe-2O-2S] cluster</name>
        <dbReference type="ChEBI" id="CHEBI:60519"/>
    </ligand>
</feature>
<feature type="modified residue" description="Cysteine persulfide" evidence="1">
    <location>
        <position position="408"/>
    </location>
</feature>
<gene>
    <name evidence="1" type="primary">hcp</name>
    <name type="ordered locus">Shew185_1260</name>
</gene>
<comment type="function">
    <text evidence="1">Catalyzes the reduction of hydroxylamine to form NH(3) and H(2)O.</text>
</comment>
<comment type="catalytic activity">
    <reaction evidence="1">
        <text>A + NH4(+) + H2O = hydroxylamine + AH2 + H(+)</text>
        <dbReference type="Rhea" id="RHEA:22052"/>
        <dbReference type="ChEBI" id="CHEBI:13193"/>
        <dbReference type="ChEBI" id="CHEBI:15377"/>
        <dbReference type="ChEBI" id="CHEBI:15378"/>
        <dbReference type="ChEBI" id="CHEBI:15429"/>
        <dbReference type="ChEBI" id="CHEBI:17499"/>
        <dbReference type="ChEBI" id="CHEBI:28938"/>
        <dbReference type="EC" id="1.7.99.1"/>
    </reaction>
</comment>
<comment type="cofactor">
    <cofactor evidence="1">
        <name>[2Fe-2S] cluster</name>
        <dbReference type="ChEBI" id="CHEBI:190135"/>
    </cofactor>
    <text evidence="1">Binds 1 [2Fe-2S] cluster.</text>
</comment>
<comment type="cofactor">
    <cofactor evidence="1">
        <name>hybrid [4Fe-2O-2S] cluster</name>
        <dbReference type="ChEBI" id="CHEBI:60519"/>
    </cofactor>
    <text evidence="1">Binds 1 hybrid [4Fe-2O-2S] cluster.</text>
</comment>
<comment type="subcellular location">
    <subcellularLocation>
        <location evidence="1">Cytoplasm</location>
    </subcellularLocation>
</comment>
<comment type="similarity">
    <text evidence="1">Belongs to the HCP family.</text>
</comment>
<reference key="1">
    <citation type="submission" date="2007-07" db="EMBL/GenBank/DDBJ databases">
        <title>Complete sequence of chromosome of Shewanella baltica OS185.</title>
        <authorList>
            <consortium name="US DOE Joint Genome Institute"/>
            <person name="Copeland A."/>
            <person name="Lucas S."/>
            <person name="Lapidus A."/>
            <person name="Barry K."/>
            <person name="Glavina del Rio T."/>
            <person name="Dalin E."/>
            <person name="Tice H."/>
            <person name="Pitluck S."/>
            <person name="Sims D."/>
            <person name="Brettin T."/>
            <person name="Bruce D."/>
            <person name="Detter J.C."/>
            <person name="Han C."/>
            <person name="Schmutz J."/>
            <person name="Larimer F."/>
            <person name="Land M."/>
            <person name="Hauser L."/>
            <person name="Kyrpides N."/>
            <person name="Mikhailova N."/>
            <person name="Brettar I."/>
            <person name="Rodrigues J."/>
            <person name="Konstantinidis K."/>
            <person name="Tiedje J."/>
            <person name="Richardson P."/>
        </authorList>
    </citation>
    <scope>NUCLEOTIDE SEQUENCE [LARGE SCALE GENOMIC DNA]</scope>
    <source>
        <strain>OS185</strain>
    </source>
</reference>
<evidence type="ECO:0000255" key="1">
    <source>
        <dbReference type="HAMAP-Rule" id="MF_00069"/>
    </source>
</evidence>
<accession>A6WKS2</accession>